<dbReference type="EMBL" id="AE004969">
    <property type="protein sequence ID" value="AAW90072.1"/>
    <property type="molecule type" value="Genomic_DNA"/>
</dbReference>
<dbReference type="RefSeq" id="WP_003689283.1">
    <property type="nucleotide sequence ID" value="NC_002946.2"/>
</dbReference>
<dbReference type="RefSeq" id="YP_208484.1">
    <property type="nucleotide sequence ID" value="NC_002946.2"/>
</dbReference>
<dbReference type="SMR" id="Q5F6W5"/>
<dbReference type="STRING" id="242231.NGO_1429"/>
<dbReference type="KEGG" id="ngo:NGO_1429"/>
<dbReference type="PATRIC" id="fig|242231.10.peg.1687"/>
<dbReference type="HOGENOM" id="CLU_005965_2_1_4"/>
<dbReference type="Proteomes" id="UP000000535">
    <property type="component" value="Chromosome"/>
</dbReference>
<dbReference type="GO" id="GO:0005524">
    <property type="term" value="F:ATP binding"/>
    <property type="evidence" value="ECO:0007669"/>
    <property type="project" value="UniProtKB-UniRule"/>
</dbReference>
<dbReference type="GO" id="GO:0140662">
    <property type="term" value="F:ATP-dependent protein folding chaperone"/>
    <property type="evidence" value="ECO:0007669"/>
    <property type="project" value="InterPro"/>
</dbReference>
<dbReference type="GO" id="GO:0051082">
    <property type="term" value="F:unfolded protein binding"/>
    <property type="evidence" value="ECO:0007669"/>
    <property type="project" value="InterPro"/>
</dbReference>
<dbReference type="CDD" id="cd10234">
    <property type="entry name" value="ASKHA_NBD_HSP70_DnaK-like"/>
    <property type="match status" value="1"/>
</dbReference>
<dbReference type="FunFam" id="1.20.1270.10:FF:000034">
    <property type="entry name" value="Chaperone protein DnaK"/>
    <property type="match status" value="1"/>
</dbReference>
<dbReference type="FunFam" id="2.60.34.10:FF:000014">
    <property type="entry name" value="Chaperone protein DnaK HSP70"/>
    <property type="match status" value="1"/>
</dbReference>
<dbReference type="FunFam" id="3.30.30.30:FF:000003">
    <property type="entry name" value="Heat shock protein 9"/>
    <property type="match status" value="1"/>
</dbReference>
<dbReference type="FunFam" id="3.30.420.40:FF:000004">
    <property type="entry name" value="Molecular chaperone DnaK"/>
    <property type="match status" value="1"/>
</dbReference>
<dbReference type="FunFam" id="3.90.640.10:FF:000003">
    <property type="entry name" value="Molecular chaperone DnaK"/>
    <property type="match status" value="1"/>
</dbReference>
<dbReference type="Gene3D" id="1.20.1270.10">
    <property type="match status" value="1"/>
</dbReference>
<dbReference type="Gene3D" id="3.30.420.40">
    <property type="match status" value="2"/>
</dbReference>
<dbReference type="Gene3D" id="3.90.640.10">
    <property type="entry name" value="Actin, Chain A, domain 4"/>
    <property type="match status" value="1"/>
</dbReference>
<dbReference type="Gene3D" id="2.60.34.10">
    <property type="entry name" value="Substrate Binding Domain Of DNAk, Chain A, domain 1"/>
    <property type="match status" value="1"/>
</dbReference>
<dbReference type="HAMAP" id="MF_00332">
    <property type="entry name" value="DnaK"/>
    <property type="match status" value="1"/>
</dbReference>
<dbReference type="InterPro" id="IPR043129">
    <property type="entry name" value="ATPase_NBD"/>
</dbReference>
<dbReference type="InterPro" id="IPR012725">
    <property type="entry name" value="Chaperone_DnaK"/>
</dbReference>
<dbReference type="InterPro" id="IPR018181">
    <property type="entry name" value="Heat_shock_70_CS"/>
</dbReference>
<dbReference type="InterPro" id="IPR029048">
    <property type="entry name" value="HSP70_C_sf"/>
</dbReference>
<dbReference type="InterPro" id="IPR029047">
    <property type="entry name" value="HSP70_peptide-bd_sf"/>
</dbReference>
<dbReference type="InterPro" id="IPR013126">
    <property type="entry name" value="Hsp_70_fam"/>
</dbReference>
<dbReference type="NCBIfam" id="NF001413">
    <property type="entry name" value="PRK00290.1"/>
    <property type="match status" value="1"/>
</dbReference>
<dbReference type="NCBIfam" id="NF003520">
    <property type="entry name" value="PRK05183.1"/>
    <property type="match status" value="1"/>
</dbReference>
<dbReference type="NCBIfam" id="TIGR02350">
    <property type="entry name" value="prok_dnaK"/>
    <property type="match status" value="1"/>
</dbReference>
<dbReference type="PANTHER" id="PTHR19375">
    <property type="entry name" value="HEAT SHOCK PROTEIN 70KDA"/>
    <property type="match status" value="1"/>
</dbReference>
<dbReference type="Pfam" id="PF00012">
    <property type="entry name" value="HSP70"/>
    <property type="match status" value="1"/>
</dbReference>
<dbReference type="PRINTS" id="PR00301">
    <property type="entry name" value="HEATSHOCK70"/>
</dbReference>
<dbReference type="SUPFAM" id="SSF53067">
    <property type="entry name" value="Actin-like ATPase domain"/>
    <property type="match status" value="2"/>
</dbReference>
<dbReference type="SUPFAM" id="SSF100934">
    <property type="entry name" value="Heat shock protein 70kD (HSP70), C-terminal subdomain"/>
    <property type="match status" value="1"/>
</dbReference>
<dbReference type="SUPFAM" id="SSF100920">
    <property type="entry name" value="Heat shock protein 70kD (HSP70), peptide-binding domain"/>
    <property type="match status" value="1"/>
</dbReference>
<dbReference type="PROSITE" id="PS00297">
    <property type="entry name" value="HSP70_1"/>
    <property type="match status" value="1"/>
</dbReference>
<dbReference type="PROSITE" id="PS00329">
    <property type="entry name" value="HSP70_2"/>
    <property type="match status" value="1"/>
</dbReference>
<dbReference type="PROSITE" id="PS01036">
    <property type="entry name" value="HSP70_3"/>
    <property type="match status" value="1"/>
</dbReference>
<name>DNAK_NEIG1</name>
<organism>
    <name type="scientific">Neisseria gonorrhoeae (strain ATCC 700825 / FA 1090)</name>
    <dbReference type="NCBI Taxonomy" id="242231"/>
    <lineage>
        <taxon>Bacteria</taxon>
        <taxon>Pseudomonadati</taxon>
        <taxon>Pseudomonadota</taxon>
        <taxon>Betaproteobacteria</taxon>
        <taxon>Neisseriales</taxon>
        <taxon>Neisseriaceae</taxon>
        <taxon>Neisseria</taxon>
    </lineage>
</organism>
<feature type="chain" id="PRO_0000225984" description="Chaperone protein DnaK">
    <location>
        <begin position="1"/>
        <end position="642"/>
    </location>
</feature>
<feature type="region of interest" description="Disordered" evidence="2">
    <location>
        <begin position="609"/>
        <end position="642"/>
    </location>
</feature>
<feature type="compositionally biased region" description="Low complexity" evidence="2">
    <location>
        <begin position="609"/>
        <end position="622"/>
    </location>
</feature>
<feature type="compositionally biased region" description="Acidic residues" evidence="2">
    <location>
        <begin position="628"/>
        <end position="642"/>
    </location>
</feature>
<feature type="modified residue" description="Phosphothreonine; by autocatalysis" evidence="1">
    <location>
        <position position="200"/>
    </location>
</feature>
<proteinExistence type="inferred from homology"/>
<reference key="1">
    <citation type="submission" date="2003-03" db="EMBL/GenBank/DDBJ databases">
        <title>The complete genome sequence of Neisseria gonorrhoeae.</title>
        <authorList>
            <person name="Lewis L.A."/>
            <person name="Gillaspy A.F."/>
            <person name="McLaughlin R.E."/>
            <person name="Gipson M."/>
            <person name="Ducey T.F."/>
            <person name="Ownbey T."/>
            <person name="Hartman K."/>
            <person name="Nydick C."/>
            <person name="Carson M.B."/>
            <person name="Vaughn J."/>
            <person name="Thomson C."/>
            <person name="Song L."/>
            <person name="Lin S."/>
            <person name="Yuan X."/>
            <person name="Najar F."/>
            <person name="Zhan M."/>
            <person name="Ren Q."/>
            <person name="Zhu H."/>
            <person name="Qi S."/>
            <person name="Kenton S.M."/>
            <person name="Lai H."/>
            <person name="White J.D."/>
            <person name="Clifton S."/>
            <person name="Roe B.A."/>
            <person name="Dyer D.W."/>
        </authorList>
    </citation>
    <scope>NUCLEOTIDE SEQUENCE [LARGE SCALE GENOMIC DNA]</scope>
    <source>
        <strain>ATCC 700825 / FA 1090</strain>
    </source>
</reference>
<gene>
    <name evidence="1" type="primary">dnaK</name>
    <name type="ordered locus">NGO_1429</name>
</gene>
<accession>Q5F6W5</accession>
<evidence type="ECO:0000255" key="1">
    <source>
        <dbReference type="HAMAP-Rule" id="MF_00332"/>
    </source>
</evidence>
<evidence type="ECO:0000256" key="2">
    <source>
        <dbReference type="SAM" id="MobiDB-lite"/>
    </source>
</evidence>
<comment type="function">
    <text evidence="1">Acts as a chaperone.</text>
</comment>
<comment type="induction">
    <text evidence="1">By stress conditions e.g. heat shock.</text>
</comment>
<comment type="similarity">
    <text evidence="1">Belongs to the heat shock protein 70 family.</text>
</comment>
<keyword id="KW-0067">ATP-binding</keyword>
<keyword id="KW-0143">Chaperone</keyword>
<keyword id="KW-0547">Nucleotide-binding</keyword>
<keyword id="KW-0597">Phosphoprotein</keyword>
<keyword id="KW-1185">Reference proteome</keyword>
<keyword id="KW-0346">Stress response</keyword>
<protein>
    <recommendedName>
        <fullName evidence="1">Chaperone protein DnaK</fullName>
    </recommendedName>
    <alternativeName>
        <fullName evidence="1">HSP70</fullName>
    </alternativeName>
    <alternativeName>
        <fullName evidence="1">Heat shock 70 kDa protein</fullName>
    </alternativeName>
    <alternativeName>
        <fullName evidence="1">Heat shock protein 70</fullName>
    </alternativeName>
</protein>
<sequence length="642" mass="68863">MAKVIGIDLGTTNSCLAISENGQTKVIENAEGARTTPSIIAYLDGGEILVGAPAKRQAVTNAKNTIYAAKRLIGHKFEDKEVQRDIESMPFEIIKADNGDAWVKAQGKELSPPQISAEVLRKMKEAAEAYLGEKVTEAVITVPAYFNDSQRQATKDAGRIAGLDVKRIINEPTAAALAFGMDKGDNKDRKIAVYDLGGGTFDISIIEIANLDGDKQFEVLATNGDTFLGGEDFDQRLIDYIIDEFKKEQGIDLKQDVMALQRLKEAAEKAKIELSSGQQTEINLPYITMDATGPKHLAMKITRAKFESLVEDLIARSIEPCRTALKDAGLSTGDIDDVILVGGQSRMPKVQEAVKDFFGKEPRKDVNPDEAVAVGAAIQGEVLSGGRSDVLLLDVTPLSLGIETMGGVMTKLIQKNTTIPTKASQVFSTAEDNQSAVTIHVLQGERERASANKSLGQFNLGDIAPAPRGMPQIEVTFDIDANGILHVSAKDKGTGKAANITIQGSSGLSEEEIERMVKDAEANAEEDKKLTELVASRNQAEALIHSVKKSLADYGDKLDAAEKEKIEAALKEAEEAVKGDDKTAIDAKAEALGTASQKLGEMVYAQAQAEAQAGEGAQANASAKKDDDVVDADFEEVKDDKK</sequence>